<feature type="chain" id="PRO_0000212666" description="Inhibitor of growth protein 3">
    <location>
        <begin position="1"/>
        <end position="421"/>
    </location>
</feature>
<feature type="zinc finger region" description="PHD-type" evidence="4">
    <location>
        <begin position="363"/>
        <end position="412"/>
    </location>
</feature>
<feature type="region of interest" description="Disordered" evidence="5">
    <location>
        <begin position="129"/>
        <end position="163"/>
    </location>
</feature>
<feature type="region of interest" description="Disordered" evidence="5">
    <location>
        <begin position="286"/>
        <end position="323"/>
    </location>
</feature>
<feature type="compositionally biased region" description="Polar residues" evidence="5">
    <location>
        <begin position="286"/>
        <end position="296"/>
    </location>
</feature>
<feature type="compositionally biased region" description="Low complexity" evidence="5">
    <location>
        <begin position="308"/>
        <end position="323"/>
    </location>
</feature>
<feature type="binding site" evidence="3">
    <location>
        <position position="366"/>
    </location>
    <ligand>
        <name>Zn(2+)</name>
        <dbReference type="ChEBI" id="CHEBI:29105"/>
        <label>1</label>
    </ligand>
</feature>
<feature type="binding site" evidence="3">
    <location>
        <position position="368"/>
    </location>
    <ligand>
        <name>Zn(2+)</name>
        <dbReference type="ChEBI" id="CHEBI:29105"/>
        <label>1</label>
    </ligand>
</feature>
<feature type="binding site" evidence="3">
    <location>
        <position position="379"/>
    </location>
    <ligand>
        <name>Zn(2+)</name>
        <dbReference type="ChEBI" id="CHEBI:29105"/>
        <label>2</label>
    </ligand>
</feature>
<feature type="binding site" evidence="3">
    <location>
        <position position="384"/>
    </location>
    <ligand>
        <name>Zn(2+)</name>
        <dbReference type="ChEBI" id="CHEBI:29105"/>
        <label>2</label>
    </ligand>
</feature>
<feature type="binding site" evidence="3">
    <location>
        <position position="390"/>
    </location>
    <ligand>
        <name>Zn(2+)</name>
        <dbReference type="ChEBI" id="CHEBI:29105"/>
        <label>1</label>
    </ligand>
</feature>
<feature type="binding site" evidence="3">
    <location>
        <position position="393"/>
    </location>
    <ligand>
        <name>Zn(2+)</name>
        <dbReference type="ChEBI" id="CHEBI:29105"/>
        <label>1</label>
    </ligand>
</feature>
<feature type="binding site" evidence="3">
    <location>
        <position position="406"/>
    </location>
    <ligand>
        <name>Zn(2+)</name>
        <dbReference type="ChEBI" id="CHEBI:29105"/>
        <label>2</label>
    </ligand>
</feature>
<feature type="binding site" evidence="3">
    <location>
        <position position="409"/>
    </location>
    <ligand>
        <name>Zn(2+)</name>
        <dbReference type="ChEBI" id="CHEBI:29105"/>
        <label>2</label>
    </ligand>
</feature>
<feature type="site" description="Histone H3K4me3 binding" evidence="3">
    <location>
        <position position="365"/>
    </location>
</feature>
<feature type="site" description="Histone H3K4me3 binding" evidence="3">
    <location>
        <position position="376"/>
    </location>
</feature>
<feature type="site" description="Histone H3K4me3 binding" evidence="3">
    <location>
        <position position="380"/>
    </location>
</feature>
<feature type="site" description="Histone H3K4me3 binding" evidence="3">
    <location>
        <position position="388"/>
    </location>
</feature>
<feature type="modified residue" description="N6-acetyllysine" evidence="7">
    <location>
        <position position="181"/>
    </location>
</feature>
<feature type="modified residue" description="N6-acetyllysine" evidence="7">
    <location>
        <position position="264"/>
    </location>
</feature>
<feature type="cross-link" description="Glycyl lysine isopeptide (Lys-Gly) (interchain with G-Cter in SUMO2)" evidence="2">
    <location>
        <position position="148"/>
    </location>
</feature>
<feature type="cross-link" description="Glycyl lysine isopeptide (Lys-Gly) (interchain with G-Cter in SUMO2)" evidence="2">
    <location>
        <position position="165"/>
    </location>
</feature>
<feature type="cross-link" description="Glycyl lysine isopeptide (Lys-Gly) (interchain with G-Cter in SUMO2)" evidence="2">
    <location>
        <position position="167"/>
    </location>
</feature>
<feature type="cross-link" description="Glycyl lysine isopeptide (Lys-Gly) (interchain with G-Cter in SUMO2)" evidence="2">
    <location>
        <position position="256"/>
    </location>
</feature>
<feature type="sequence conflict" description="In Ref. 1; AAG23286." evidence="6" ref="1">
    <original>N</original>
    <variation>T</variation>
    <location>
        <position position="257"/>
    </location>
</feature>
<gene>
    <name type="primary">Ing3</name>
</gene>
<proteinExistence type="evidence at protein level"/>
<protein>
    <recommendedName>
        <fullName>Inhibitor of growth protein 3</fullName>
    </recommendedName>
    <alternativeName>
        <fullName>p47ING3</fullName>
    </alternativeName>
</protein>
<evidence type="ECO:0000250" key="1"/>
<evidence type="ECO:0000250" key="2">
    <source>
        <dbReference type="UniProtKB" id="Q9NXR8"/>
    </source>
</evidence>
<evidence type="ECO:0000250" key="3">
    <source>
        <dbReference type="UniProtKB" id="Q9UK53"/>
    </source>
</evidence>
<evidence type="ECO:0000255" key="4">
    <source>
        <dbReference type="PROSITE-ProRule" id="PRU00146"/>
    </source>
</evidence>
<evidence type="ECO:0000256" key="5">
    <source>
        <dbReference type="SAM" id="MobiDB-lite"/>
    </source>
</evidence>
<evidence type="ECO:0000305" key="6"/>
<evidence type="ECO:0007744" key="7">
    <source>
    </source>
</evidence>
<organism>
    <name type="scientific">Mus musculus</name>
    <name type="common">Mouse</name>
    <dbReference type="NCBI Taxonomy" id="10090"/>
    <lineage>
        <taxon>Eukaryota</taxon>
        <taxon>Metazoa</taxon>
        <taxon>Chordata</taxon>
        <taxon>Craniata</taxon>
        <taxon>Vertebrata</taxon>
        <taxon>Euteleostomi</taxon>
        <taxon>Mammalia</taxon>
        <taxon>Eutheria</taxon>
        <taxon>Euarchontoglires</taxon>
        <taxon>Glires</taxon>
        <taxon>Rodentia</taxon>
        <taxon>Myomorpha</taxon>
        <taxon>Muroidea</taxon>
        <taxon>Muridae</taxon>
        <taxon>Murinae</taxon>
        <taxon>Mus</taxon>
        <taxon>Mus</taxon>
    </lineage>
</organism>
<accession>Q8VEK6</accession>
<accession>Q99JS6</accession>
<accession>Q9ERB2</accession>
<keyword id="KW-0007">Acetylation</keyword>
<keyword id="KW-0156">Chromatin regulator</keyword>
<keyword id="KW-0341">Growth regulation</keyword>
<keyword id="KW-1017">Isopeptide bond</keyword>
<keyword id="KW-0479">Metal-binding</keyword>
<keyword id="KW-0539">Nucleus</keyword>
<keyword id="KW-1185">Reference proteome</keyword>
<keyword id="KW-0804">Transcription</keyword>
<keyword id="KW-0805">Transcription regulation</keyword>
<keyword id="KW-0832">Ubl conjugation</keyword>
<keyword id="KW-0862">Zinc</keyword>
<keyword id="KW-0863">Zinc-finger</keyword>
<name>ING3_MOUSE</name>
<dbReference type="EMBL" id="AY007791">
    <property type="protein sequence ID" value="AAG23286.1"/>
    <property type="status" value="ALT_INIT"/>
    <property type="molecule type" value="mRNA"/>
</dbReference>
<dbReference type="EMBL" id="AK080787">
    <property type="protein sequence ID" value="BAC38021.1"/>
    <property type="status" value="ALT_INIT"/>
    <property type="molecule type" value="mRNA"/>
</dbReference>
<dbReference type="EMBL" id="BC005721">
    <property type="protein sequence ID" value="AAH05721.1"/>
    <property type="molecule type" value="mRNA"/>
</dbReference>
<dbReference type="EMBL" id="BC018342">
    <property type="protein sequence ID" value="AAH18342.1"/>
    <property type="status" value="ALT_INIT"/>
    <property type="molecule type" value="mRNA"/>
</dbReference>
<dbReference type="CCDS" id="CCDS39434.1"/>
<dbReference type="RefSeq" id="NP_001297990.1">
    <property type="nucleotide sequence ID" value="NM_001311061.1"/>
</dbReference>
<dbReference type="RefSeq" id="NP_076115.3">
    <property type="nucleotide sequence ID" value="NM_023626.4"/>
</dbReference>
<dbReference type="SMR" id="Q8VEK6"/>
<dbReference type="BioGRID" id="214920">
    <property type="interactions" value="4"/>
</dbReference>
<dbReference type="ComplexPortal" id="CPX-747">
    <property type="entry name" value="Piccolo NuA4 histone acetyltransferase complex"/>
</dbReference>
<dbReference type="ComplexPortal" id="CPX-990">
    <property type="entry name" value="NuA4 histone acetyltransferase complex"/>
</dbReference>
<dbReference type="FunCoup" id="Q8VEK6">
    <property type="interactions" value="3015"/>
</dbReference>
<dbReference type="IntAct" id="Q8VEK6">
    <property type="interactions" value="5"/>
</dbReference>
<dbReference type="MINT" id="Q8VEK6"/>
<dbReference type="STRING" id="10090.ENSMUSP00000031680"/>
<dbReference type="iPTMnet" id="Q8VEK6"/>
<dbReference type="PhosphoSitePlus" id="Q8VEK6"/>
<dbReference type="jPOST" id="Q8VEK6"/>
<dbReference type="PaxDb" id="10090-ENSMUSP00000031680"/>
<dbReference type="ProteomicsDB" id="267337"/>
<dbReference type="Pumba" id="Q8VEK6"/>
<dbReference type="Antibodypedia" id="31689">
    <property type="antibodies" value="240 antibodies from 32 providers"/>
</dbReference>
<dbReference type="DNASU" id="71777"/>
<dbReference type="Ensembl" id="ENSMUST00000031680.10">
    <property type="protein sequence ID" value="ENSMUSP00000031680.4"/>
    <property type="gene ID" value="ENSMUSG00000029670.13"/>
</dbReference>
<dbReference type="GeneID" id="71777"/>
<dbReference type="KEGG" id="mmu:71777"/>
<dbReference type="UCSC" id="uc009bat.1">
    <property type="organism name" value="mouse"/>
</dbReference>
<dbReference type="AGR" id="MGI:1919027"/>
<dbReference type="CTD" id="54556"/>
<dbReference type="MGI" id="MGI:1919027">
    <property type="gene designation" value="Ing3"/>
</dbReference>
<dbReference type="VEuPathDB" id="HostDB:ENSMUSG00000029670"/>
<dbReference type="eggNOG" id="KOG1973">
    <property type="taxonomic scope" value="Eukaryota"/>
</dbReference>
<dbReference type="GeneTree" id="ENSGT00940000156619"/>
<dbReference type="InParanoid" id="Q8VEK6"/>
<dbReference type="OMA" id="YEWFHWK"/>
<dbReference type="OrthoDB" id="5411773at2759"/>
<dbReference type="PhylomeDB" id="Q8VEK6"/>
<dbReference type="TreeFam" id="TF106497"/>
<dbReference type="BioGRID-ORCS" id="71777">
    <property type="hits" value="19 hits in 83 CRISPR screens"/>
</dbReference>
<dbReference type="PRO" id="PR:Q8VEK6"/>
<dbReference type="Proteomes" id="UP000000589">
    <property type="component" value="Chromosome 6"/>
</dbReference>
<dbReference type="RNAct" id="Q8VEK6">
    <property type="molecule type" value="protein"/>
</dbReference>
<dbReference type="Bgee" id="ENSMUSG00000029670">
    <property type="expression patterns" value="Expressed in animal zygote and 259 other cell types or tissues"/>
</dbReference>
<dbReference type="ExpressionAtlas" id="Q8VEK6">
    <property type="expression patterns" value="baseline and differential"/>
</dbReference>
<dbReference type="GO" id="GO:0035267">
    <property type="term" value="C:NuA4 histone acetyltransferase complex"/>
    <property type="evidence" value="ECO:0000250"/>
    <property type="project" value="UniProtKB"/>
</dbReference>
<dbReference type="GO" id="GO:0000786">
    <property type="term" value="C:nucleosome"/>
    <property type="evidence" value="ECO:0000266"/>
    <property type="project" value="ComplexPortal"/>
</dbReference>
<dbReference type="GO" id="GO:0005634">
    <property type="term" value="C:nucleus"/>
    <property type="evidence" value="ECO:0000303"/>
    <property type="project" value="ComplexPortal"/>
</dbReference>
<dbReference type="GO" id="GO:0032777">
    <property type="term" value="C:piccolo histone acetyltransferase complex"/>
    <property type="evidence" value="ECO:0000250"/>
    <property type="project" value="UniProtKB"/>
</dbReference>
<dbReference type="GO" id="GO:0000812">
    <property type="term" value="C:Swr1 complex"/>
    <property type="evidence" value="ECO:0000250"/>
    <property type="project" value="UniProtKB"/>
</dbReference>
<dbReference type="GO" id="GO:0043998">
    <property type="term" value="F:histone H2A acetyltransferase activity"/>
    <property type="evidence" value="ECO:0007669"/>
    <property type="project" value="Ensembl"/>
</dbReference>
<dbReference type="GO" id="GO:0140002">
    <property type="term" value="F:histone H3K4me3 reader activity"/>
    <property type="evidence" value="ECO:0007669"/>
    <property type="project" value="Ensembl"/>
</dbReference>
<dbReference type="GO" id="GO:0043997">
    <property type="term" value="F:histone H4K12 acetyltransferase activity"/>
    <property type="evidence" value="ECO:0007669"/>
    <property type="project" value="Ensembl"/>
</dbReference>
<dbReference type="GO" id="GO:0046972">
    <property type="term" value="F:histone H4K16 acetyltransferase activity"/>
    <property type="evidence" value="ECO:0007669"/>
    <property type="project" value="Ensembl"/>
</dbReference>
<dbReference type="GO" id="GO:0043995">
    <property type="term" value="F:histone H4K5 acetyltransferase activity"/>
    <property type="evidence" value="ECO:0007669"/>
    <property type="project" value="Ensembl"/>
</dbReference>
<dbReference type="GO" id="GO:0043996">
    <property type="term" value="F:histone H4K8 acetyltransferase activity"/>
    <property type="evidence" value="ECO:0007669"/>
    <property type="project" value="Ensembl"/>
</dbReference>
<dbReference type="GO" id="GO:0008270">
    <property type="term" value="F:zinc ion binding"/>
    <property type="evidence" value="ECO:0007669"/>
    <property type="project" value="UniProtKB-KW"/>
</dbReference>
<dbReference type="GO" id="GO:0045893">
    <property type="term" value="P:positive regulation of DNA-templated transcription"/>
    <property type="evidence" value="ECO:0000303"/>
    <property type="project" value="ComplexPortal"/>
</dbReference>
<dbReference type="GO" id="GO:1905168">
    <property type="term" value="P:positive regulation of double-strand break repair via homologous recombination"/>
    <property type="evidence" value="ECO:0000266"/>
    <property type="project" value="ComplexPortal"/>
</dbReference>
<dbReference type="GO" id="GO:0042981">
    <property type="term" value="P:regulation of apoptotic process"/>
    <property type="evidence" value="ECO:0000303"/>
    <property type="project" value="ComplexPortal"/>
</dbReference>
<dbReference type="GO" id="GO:0051726">
    <property type="term" value="P:regulation of cell cycle"/>
    <property type="evidence" value="ECO:0000266"/>
    <property type="project" value="ComplexPortal"/>
</dbReference>
<dbReference type="GO" id="GO:1902275">
    <property type="term" value="P:regulation of chromatin organization"/>
    <property type="evidence" value="ECO:0000303"/>
    <property type="project" value="ComplexPortal"/>
</dbReference>
<dbReference type="GO" id="GO:2000779">
    <property type="term" value="P:regulation of double-strand break repair"/>
    <property type="evidence" value="ECO:0000303"/>
    <property type="project" value="ComplexPortal"/>
</dbReference>
<dbReference type="CDD" id="cd16858">
    <property type="entry name" value="ING_ING3_Yng2p"/>
    <property type="match status" value="1"/>
</dbReference>
<dbReference type="CDD" id="cd15585">
    <property type="entry name" value="PHD_ING3"/>
    <property type="match status" value="1"/>
</dbReference>
<dbReference type="FunFam" id="3.30.40.10:FF:000103">
    <property type="entry name" value="Inhibitor of growth protein"/>
    <property type="match status" value="1"/>
</dbReference>
<dbReference type="Gene3D" id="6.10.140.1740">
    <property type="match status" value="1"/>
</dbReference>
<dbReference type="Gene3D" id="3.30.40.10">
    <property type="entry name" value="Zinc/RING finger domain, C3HC4 (zinc finger)"/>
    <property type="match status" value="1"/>
</dbReference>
<dbReference type="InterPro" id="IPR042020">
    <property type="entry name" value="ING3_PHD"/>
</dbReference>
<dbReference type="InterPro" id="IPR028651">
    <property type="entry name" value="ING_fam"/>
</dbReference>
<dbReference type="InterPro" id="IPR024610">
    <property type="entry name" value="ING_N_histone-binding"/>
</dbReference>
<dbReference type="InterPro" id="IPR019786">
    <property type="entry name" value="Zinc_finger_PHD-type_CS"/>
</dbReference>
<dbReference type="InterPro" id="IPR011011">
    <property type="entry name" value="Znf_FYVE_PHD"/>
</dbReference>
<dbReference type="InterPro" id="IPR001965">
    <property type="entry name" value="Znf_PHD"/>
</dbReference>
<dbReference type="InterPro" id="IPR019787">
    <property type="entry name" value="Znf_PHD-finger"/>
</dbReference>
<dbReference type="InterPro" id="IPR013083">
    <property type="entry name" value="Znf_RING/FYVE/PHD"/>
</dbReference>
<dbReference type="PANTHER" id="PTHR10333">
    <property type="entry name" value="INHIBITOR OF GROWTH PROTEIN"/>
    <property type="match status" value="1"/>
</dbReference>
<dbReference type="PANTHER" id="PTHR10333:SF103">
    <property type="entry name" value="INHIBITOR OF GROWTH PROTEIN 3"/>
    <property type="match status" value="1"/>
</dbReference>
<dbReference type="Pfam" id="PF12998">
    <property type="entry name" value="ING"/>
    <property type="match status" value="1"/>
</dbReference>
<dbReference type="SMART" id="SM01408">
    <property type="entry name" value="ING"/>
    <property type="match status" value="1"/>
</dbReference>
<dbReference type="SMART" id="SM00249">
    <property type="entry name" value="PHD"/>
    <property type="match status" value="1"/>
</dbReference>
<dbReference type="SUPFAM" id="SSF57903">
    <property type="entry name" value="FYVE/PHD zinc finger"/>
    <property type="match status" value="1"/>
</dbReference>
<dbReference type="PROSITE" id="PS01359">
    <property type="entry name" value="ZF_PHD_1"/>
    <property type="match status" value="1"/>
</dbReference>
<dbReference type="PROSITE" id="PS50016">
    <property type="entry name" value="ZF_PHD_2"/>
    <property type="match status" value="1"/>
</dbReference>
<reference key="1">
    <citation type="submission" date="2000-09" db="EMBL/GenBank/DDBJ databases">
        <authorList>
            <person name="Zenklusen J.C."/>
            <person name="Green E.D."/>
        </authorList>
    </citation>
    <scope>NUCLEOTIDE SEQUENCE [MRNA]</scope>
</reference>
<reference key="2">
    <citation type="journal article" date="2005" name="Science">
        <title>The transcriptional landscape of the mammalian genome.</title>
        <authorList>
            <person name="Carninci P."/>
            <person name="Kasukawa T."/>
            <person name="Katayama S."/>
            <person name="Gough J."/>
            <person name="Frith M.C."/>
            <person name="Maeda N."/>
            <person name="Oyama R."/>
            <person name="Ravasi T."/>
            <person name="Lenhard B."/>
            <person name="Wells C."/>
            <person name="Kodzius R."/>
            <person name="Shimokawa K."/>
            <person name="Bajic V.B."/>
            <person name="Brenner S.E."/>
            <person name="Batalov S."/>
            <person name="Forrest A.R."/>
            <person name="Zavolan M."/>
            <person name="Davis M.J."/>
            <person name="Wilming L.G."/>
            <person name="Aidinis V."/>
            <person name="Allen J.E."/>
            <person name="Ambesi-Impiombato A."/>
            <person name="Apweiler R."/>
            <person name="Aturaliya R.N."/>
            <person name="Bailey T.L."/>
            <person name="Bansal M."/>
            <person name="Baxter L."/>
            <person name="Beisel K.W."/>
            <person name="Bersano T."/>
            <person name="Bono H."/>
            <person name="Chalk A.M."/>
            <person name="Chiu K.P."/>
            <person name="Choudhary V."/>
            <person name="Christoffels A."/>
            <person name="Clutterbuck D.R."/>
            <person name="Crowe M.L."/>
            <person name="Dalla E."/>
            <person name="Dalrymple B.P."/>
            <person name="de Bono B."/>
            <person name="Della Gatta G."/>
            <person name="di Bernardo D."/>
            <person name="Down T."/>
            <person name="Engstrom P."/>
            <person name="Fagiolini M."/>
            <person name="Faulkner G."/>
            <person name="Fletcher C.F."/>
            <person name="Fukushima T."/>
            <person name="Furuno M."/>
            <person name="Futaki S."/>
            <person name="Gariboldi M."/>
            <person name="Georgii-Hemming P."/>
            <person name="Gingeras T.R."/>
            <person name="Gojobori T."/>
            <person name="Green R.E."/>
            <person name="Gustincich S."/>
            <person name="Harbers M."/>
            <person name="Hayashi Y."/>
            <person name="Hensch T.K."/>
            <person name="Hirokawa N."/>
            <person name="Hill D."/>
            <person name="Huminiecki L."/>
            <person name="Iacono M."/>
            <person name="Ikeo K."/>
            <person name="Iwama A."/>
            <person name="Ishikawa T."/>
            <person name="Jakt M."/>
            <person name="Kanapin A."/>
            <person name="Katoh M."/>
            <person name="Kawasawa Y."/>
            <person name="Kelso J."/>
            <person name="Kitamura H."/>
            <person name="Kitano H."/>
            <person name="Kollias G."/>
            <person name="Krishnan S.P."/>
            <person name="Kruger A."/>
            <person name="Kummerfeld S.K."/>
            <person name="Kurochkin I.V."/>
            <person name="Lareau L.F."/>
            <person name="Lazarevic D."/>
            <person name="Lipovich L."/>
            <person name="Liu J."/>
            <person name="Liuni S."/>
            <person name="McWilliam S."/>
            <person name="Madan Babu M."/>
            <person name="Madera M."/>
            <person name="Marchionni L."/>
            <person name="Matsuda H."/>
            <person name="Matsuzawa S."/>
            <person name="Miki H."/>
            <person name="Mignone F."/>
            <person name="Miyake S."/>
            <person name="Morris K."/>
            <person name="Mottagui-Tabar S."/>
            <person name="Mulder N."/>
            <person name="Nakano N."/>
            <person name="Nakauchi H."/>
            <person name="Ng P."/>
            <person name="Nilsson R."/>
            <person name="Nishiguchi S."/>
            <person name="Nishikawa S."/>
            <person name="Nori F."/>
            <person name="Ohara O."/>
            <person name="Okazaki Y."/>
            <person name="Orlando V."/>
            <person name="Pang K.C."/>
            <person name="Pavan W.J."/>
            <person name="Pavesi G."/>
            <person name="Pesole G."/>
            <person name="Petrovsky N."/>
            <person name="Piazza S."/>
            <person name="Reed J."/>
            <person name="Reid J.F."/>
            <person name="Ring B.Z."/>
            <person name="Ringwald M."/>
            <person name="Rost B."/>
            <person name="Ruan Y."/>
            <person name="Salzberg S.L."/>
            <person name="Sandelin A."/>
            <person name="Schneider C."/>
            <person name="Schoenbach C."/>
            <person name="Sekiguchi K."/>
            <person name="Semple C.A."/>
            <person name="Seno S."/>
            <person name="Sessa L."/>
            <person name="Sheng Y."/>
            <person name="Shibata Y."/>
            <person name="Shimada H."/>
            <person name="Shimada K."/>
            <person name="Silva D."/>
            <person name="Sinclair B."/>
            <person name="Sperling S."/>
            <person name="Stupka E."/>
            <person name="Sugiura K."/>
            <person name="Sultana R."/>
            <person name="Takenaka Y."/>
            <person name="Taki K."/>
            <person name="Tammoja K."/>
            <person name="Tan S.L."/>
            <person name="Tang S."/>
            <person name="Taylor M.S."/>
            <person name="Tegner J."/>
            <person name="Teichmann S.A."/>
            <person name="Ueda H.R."/>
            <person name="van Nimwegen E."/>
            <person name="Verardo R."/>
            <person name="Wei C.L."/>
            <person name="Yagi K."/>
            <person name="Yamanishi H."/>
            <person name="Zabarovsky E."/>
            <person name="Zhu S."/>
            <person name="Zimmer A."/>
            <person name="Hide W."/>
            <person name="Bult C."/>
            <person name="Grimmond S.M."/>
            <person name="Teasdale R.D."/>
            <person name="Liu E.T."/>
            <person name="Brusic V."/>
            <person name="Quackenbush J."/>
            <person name="Wahlestedt C."/>
            <person name="Mattick J.S."/>
            <person name="Hume D.A."/>
            <person name="Kai C."/>
            <person name="Sasaki D."/>
            <person name="Tomaru Y."/>
            <person name="Fukuda S."/>
            <person name="Kanamori-Katayama M."/>
            <person name="Suzuki M."/>
            <person name="Aoki J."/>
            <person name="Arakawa T."/>
            <person name="Iida J."/>
            <person name="Imamura K."/>
            <person name="Itoh M."/>
            <person name="Kato T."/>
            <person name="Kawaji H."/>
            <person name="Kawagashira N."/>
            <person name="Kawashima T."/>
            <person name="Kojima M."/>
            <person name="Kondo S."/>
            <person name="Konno H."/>
            <person name="Nakano K."/>
            <person name="Ninomiya N."/>
            <person name="Nishio T."/>
            <person name="Okada M."/>
            <person name="Plessy C."/>
            <person name="Shibata K."/>
            <person name="Shiraki T."/>
            <person name="Suzuki S."/>
            <person name="Tagami M."/>
            <person name="Waki K."/>
            <person name="Watahiki A."/>
            <person name="Okamura-Oho Y."/>
            <person name="Suzuki H."/>
            <person name="Kawai J."/>
            <person name="Hayashizaki Y."/>
        </authorList>
    </citation>
    <scope>NUCLEOTIDE SEQUENCE [LARGE SCALE MRNA]</scope>
    <source>
        <strain>C57BL/6J</strain>
        <tissue>Embryo</tissue>
    </source>
</reference>
<reference key="3">
    <citation type="journal article" date="2004" name="Genome Res.">
        <title>The status, quality, and expansion of the NIH full-length cDNA project: the Mammalian Gene Collection (MGC).</title>
        <authorList>
            <consortium name="The MGC Project Team"/>
        </authorList>
    </citation>
    <scope>NUCLEOTIDE SEQUENCE [LARGE SCALE MRNA]</scope>
    <source>
        <strain>Czech II</strain>
        <strain>FVB/N</strain>
        <tissue>Mammary tumor</tissue>
    </source>
</reference>
<reference key="4">
    <citation type="journal article" date="2013" name="Mol. Cell">
        <title>SIRT5-mediated lysine desuccinylation impacts diverse metabolic pathways.</title>
        <authorList>
            <person name="Park J."/>
            <person name="Chen Y."/>
            <person name="Tishkoff D.X."/>
            <person name="Peng C."/>
            <person name="Tan M."/>
            <person name="Dai L."/>
            <person name="Xie Z."/>
            <person name="Zhang Y."/>
            <person name="Zwaans B.M."/>
            <person name="Skinner M.E."/>
            <person name="Lombard D.B."/>
            <person name="Zhao Y."/>
        </authorList>
    </citation>
    <scope>ACETYLATION [LARGE SCALE ANALYSIS] AT LYS-181 AND LYS-264</scope>
    <scope>IDENTIFICATION BY MASS SPECTROMETRY [LARGE SCALE ANALYSIS]</scope>
    <source>
        <tissue>Embryonic fibroblast</tissue>
    </source>
</reference>
<comment type="function">
    <text evidence="1">Component of the NuA4 histone acetyltransferase (HAT) complex which is involved in transcriptional activation of select genes principally by acetylation of nucleosomal histones H4 and H2A. This modification may both alter nucleosome - DNA interactions and promote interaction of the modified histones with other proteins which positively regulate transcription. This complex may be required for the activation of transcriptional programs associated with oncogene and proto-oncogene mediated growth induction, tumor suppressor mediated growth arrest and replicative senescence, apoptosis, and DNA repair. NuA4 may also play a direct role in DNA repair when directly recruited to sites of DNA damage. Component of a SWR1-like complex that specifically mediates the removal of histone H2A.Z/H2AZ1 from the nucleosome (By similarity).</text>
</comment>
<comment type="subunit">
    <text evidence="1">Interacts with H3K4me3 and to a lesser extent with H3K4me2 (By similarity). Component of the NuA4 histone acetyltransferase complex which contains the catalytic subunit KAT5/TIP60 and the subunits EP400, TRRAP/PAF400, BRD8/SMAP, EPC1, DMAP1/DNMAP1, RUVBL1/TIP49, RUVBL2, ING3, actin, ACTL6A/BAF53A, MORF4L1/MRG15, MORF4L2/MRGX, MRGBP, YEATS4/GAS41, VPS72/YL1 and MEAF6. The NuA4 complex interacts with MYC. HTATTIP/TIP60, EPC1, and ING3 together constitute a minimal HAT complex termed Piccolo NuA4. Component of a SWR1-like complex (By similarity).</text>
</comment>
<comment type="subcellular location">
    <subcellularLocation>
        <location evidence="1">Nucleus</location>
    </subcellularLocation>
</comment>
<comment type="domain">
    <text evidence="1">The PHD-type zinc finger mediates the binding to H3K4me3.</text>
</comment>
<comment type="similarity">
    <text evidence="6">Belongs to the ING family.</text>
</comment>
<comment type="sequence caution" evidence="6">
    <conflict type="erroneous initiation">
        <sequence resource="EMBL-CDS" id="AAG23286"/>
    </conflict>
</comment>
<comment type="sequence caution" evidence="6">
    <conflict type="erroneous initiation">
        <sequence resource="EMBL-CDS" id="AAH18342"/>
    </conflict>
</comment>
<comment type="sequence caution" evidence="6">
    <conflict type="erroneous initiation">
        <sequence resource="EMBL-CDS" id="BAC38021"/>
    </conflict>
</comment>
<sequence length="421" mass="46847">MLYLEDYLEMIEQLPMDLRDRFTEMREMDLQVQNAMDQLEQRVSEFFMNAKKNKPEWREEQMASIKKDYYKALEDADEKVQLANQIYDLVDRHLRKLDQELAKFKMELEADNAGITEILERRSLELDAPSQPVNNHHAHSHTPVEKRKYNPTSHHAAADHIPEKKFKSEALLSTLTSDASKENTLGCRNNNSTASCNNAYNVNSSQPLASYNIGSLSSGAGAGAITMAAAQAVQATAQMKEGRRTSSLKASYEAFKNNDFQLGKEFSIPRETAGYSSSSALMTTLTQNASSSATDSRSGRKSKNNTKSSSQQSSSSSSSSSSSSLSLCSSSSTVVQEVSQQATVVPESDSNSQVDWTYDPNEPRYCICNQVSYGEMVGCDNQDCPIEWFHYGCVGLTEAPKGKWFCPQCTAAMKRRGSRHK</sequence>